<feature type="chain" id="PRO_0000061591" description="Cytochrome b">
    <location>
        <begin position="1"/>
        <end position="379"/>
    </location>
</feature>
<feature type="transmembrane region" description="Helical" evidence="2">
    <location>
        <begin position="33"/>
        <end position="53"/>
    </location>
</feature>
<feature type="transmembrane region" description="Helical" evidence="2">
    <location>
        <begin position="77"/>
        <end position="98"/>
    </location>
</feature>
<feature type="transmembrane region" description="Helical" evidence="2">
    <location>
        <begin position="113"/>
        <end position="133"/>
    </location>
</feature>
<feature type="transmembrane region" description="Helical" evidence="2">
    <location>
        <begin position="178"/>
        <end position="198"/>
    </location>
</feature>
<feature type="transmembrane region" description="Helical" evidence="2">
    <location>
        <begin position="226"/>
        <end position="246"/>
    </location>
</feature>
<feature type="transmembrane region" description="Helical" evidence="2">
    <location>
        <begin position="288"/>
        <end position="308"/>
    </location>
</feature>
<feature type="transmembrane region" description="Helical" evidence="2">
    <location>
        <begin position="320"/>
        <end position="340"/>
    </location>
</feature>
<feature type="transmembrane region" description="Helical" evidence="2">
    <location>
        <begin position="347"/>
        <end position="367"/>
    </location>
</feature>
<feature type="binding site" description="axial binding residue" evidence="2">
    <location>
        <position position="83"/>
    </location>
    <ligand>
        <name>heme b</name>
        <dbReference type="ChEBI" id="CHEBI:60344"/>
        <label>b562</label>
    </ligand>
    <ligandPart>
        <name>Fe</name>
        <dbReference type="ChEBI" id="CHEBI:18248"/>
    </ligandPart>
</feature>
<feature type="binding site" description="axial binding residue" evidence="2">
    <location>
        <position position="97"/>
    </location>
    <ligand>
        <name>heme b</name>
        <dbReference type="ChEBI" id="CHEBI:60344"/>
        <label>b566</label>
    </ligand>
    <ligandPart>
        <name>Fe</name>
        <dbReference type="ChEBI" id="CHEBI:18248"/>
    </ligandPart>
</feature>
<feature type="binding site" description="axial binding residue" evidence="2">
    <location>
        <position position="182"/>
    </location>
    <ligand>
        <name>heme b</name>
        <dbReference type="ChEBI" id="CHEBI:60344"/>
        <label>b562</label>
    </ligand>
    <ligandPart>
        <name>Fe</name>
        <dbReference type="ChEBI" id="CHEBI:18248"/>
    </ligandPart>
</feature>
<feature type="binding site" description="axial binding residue" evidence="2">
    <location>
        <position position="196"/>
    </location>
    <ligand>
        <name>heme b</name>
        <dbReference type="ChEBI" id="CHEBI:60344"/>
        <label>b566</label>
    </ligand>
    <ligandPart>
        <name>Fe</name>
        <dbReference type="ChEBI" id="CHEBI:18248"/>
    </ligandPart>
</feature>
<feature type="binding site" evidence="2">
    <location>
        <position position="201"/>
    </location>
    <ligand>
        <name>a ubiquinone</name>
        <dbReference type="ChEBI" id="CHEBI:16389"/>
    </ligand>
</feature>
<feature type="sequence variant" description="In strain: Isolate S11.">
    <original>T</original>
    <variation>S</variation>
    <location>
        <position position="17"/>
    </location>
</feature>
<accession>Q9TF51</accession>
<accession>Q9TF88</accession>
<geneLocation type="mitochondrion"/>
<sequence>MTNIRKTHPLIKIVNHTFIDLPAPSNISAWWNFGSLLGLCLAIQILTGLFLAMHYTSDTMTAFSSVTHICRDVNYGWLIRYMHANGASMFFICLFLHVGRGLYYGSYTYFETWNIGVILLFVVMATAFMGYVLPWGQMSFWGATVITNLLSAIPYIGTTLVEWIWGGFSVDKATLTRFFAFHFVLPFIIAALVMVHLLFLHETGSNNPSGLISDSDKIPFHPYYTIKDILGVLLLILALMTLVLFSPDLLGDPDNYTPANPLSTPPHIKPEWYFLFAYAILRSIPNKLGGVLALVFSILILMLFPLLHLSKQRSMMFRPLSQCMFWILVADLFTLTWIGGQPVEYPFITIGQLASVLYFTIILLILPTVSLIENKLLKW</sequence>
<name>CYB_UROAR</name>
<organism>
    <name type="scientific">Urocitellus armatus</name>
    <name type="common">Uinta ground squirrel</name>
    <name type="synonym">Spermophilus armatus</name>
    <dbReference type="NCBI Taxonomy" id="99832"/>
    <lineage>
        <taxon>Eukaryota</taxon>
        <taxon>Metazoa</taxon>
        <taxon>Chordata</taxon>
        <taxon>Craniata</taxon>
        <taxon>Vertebrata</taxon>
        <taxon>Euteleostomi</taxon>
        <taxon>Mammalia</taxon>
        <taxon>Eutheria</taxon>
        <taxon>Euarchontoglires</taxon>
        <taxon>Glires</taxon>
        <taxon>Rodentia</taxon>
        <taxon>Sciuromorpha</taxon>
        <taxon>Sciuridae</taxon>
        <taxon>Xerinae</taxon>
        <taxon>Marmotini</taxon>
        <taxon>Urocitellus</taxon>
    </lineage>
</organism>
<reference key="1">
    <citation type="submission" date="1999-06" db="EMBL/GenBank/DDBJ databases">
        <title>A molecular phylogeny of ground squirrels and prairie dogs.</title>
        <authorList>
            <person name="Harrison R.G."/>
            <person name="Sherman P.W."/>
            <person name="Yensen E."/>
            <person name="Hoffmann R.S."/>
            <person name="Bogdanowicz S.M."/>
        </authorList>
    </citation>
    <scope>NUCLEOTIDE SEQUENCE [GENOMIC DNA]</scope>
    <source>
        <strain>Isolate S11</strain>
        <strain>Isolate S5</strain>
    </source>
</reference>
<dbReference type="EMBL" id="AF157901">
    <property type="protein sequence ID" value="AAD50185.1"/>
    <property type="molecule type" value="Genomic_DNA"/>
</dbReference>
<dbReference type="EMBL" id="AF157850">
    <property type="protein sequence ID" value="AAD50134.1"/>
    <property type="molecule type" value="Genomic_DNA"/>
</dbReference>
<dbReference type="SMR" id="Q9TF51"/>
<dbReference type="GO" id="GO:0005743">
    <property type="term" value="C:mitochondrial inner membrane"/>
    <property type="evidence" value="ECO:0007669"/>
    <property type="project" value="UniProtKB-SubCell"/>
</dbReference>
<dbReference type="GO" id="GO:0045275">
    <property type="term" value="C:respiratory chain complex III"/>
    <property type="evidence" value="ECO:0007669"/>
    <property type="project" value="InterPro"/>
</dbReference>
<dbReference type="GO" id="GO:0046872">
    <property type="term" value="F:metal ion binding"/>
    <property type="evidence" value="ECO:0007669"/>
    <property type="project" value="UniProtKB-KW"/>
</dbReference>
<dbReference type="GO" id="GO:0008121">
    <property type="term" value="F:ubiquinol-cytochrome-c reductase activity"/>
    <property type="evidence" value="ECO:0007669"/>
    <property type="project" value="InterPro"/>
</dbReference>
<dbReference type="GO" id="GO:0006122">
    <property type="term" value="P:mitochondrial electron transport, ubiquinol to cytochrome c"/>
    <property type="evidence" value="ECO:0007669"/>
    <property type="project" value="TreeGrafter"/>
</dbReference>
<dbReference type="CDD" id="cd00290">
    <property type="entry name" value="cytochrome_b_C"/>
    <property type="match status" value="1"/>
</dbReference>
<dbReference type="CDD" id="cd00284">
    <property type="entry name" value="Cytochrome_b_N"/>
    <property type="match status" value="1"/>
</dbReference>
<dbReference type="FunFam" id="1.20.810.10:FF:000002">
    <property type="entry name" value="Cytochrome b"/>
    <property type="match status" value="1"/>
</dbReference>
<dbReference type="Gene3D" id="1.20.810.10">
    <property type="entry name" value="Cytochrome Bc1 Complex, Chain C"/>
    <property type="match status" value="1"/>
</dbReference>
<dbReference type="InterPro" id="IPR005798">
    <property type="entry name" value="Cyt_b/b6_C"/>
</dbReference>
<dbReference type="InterPro" id="IPR036150">
    <property type="entry name" value="Cyt_b/b6_C_sf"/>
</dbReference>
<dbReference type="InterPro" id="IPR005797">
    <property type="entry name" value="Cyt_b/b6_N"/>
</dbReference>
<dbReference type="InterPro" id="IPR027387">
    <property type="entry name" value="Cytb/b6-like_sf"/>
</dbReference>
<dbReference type="InterPro" id="IPR030689">
    <property type="entry name" value="Cytochrome_b"/>
</dbReference>
<dbReference type="InterPro" id="IPR048260">
    <property type="entry name" value="Cytochrome_b_C_euk/bac"/>
</dbReference>
<dbReference type="InterPro" id="IPR048259">
    <property type="entry name" value="Cytochrome_b_N_euk/bac"/>
</dbReference>
<dbReference type="InterPro" id="IPR016174">
    <property type="entry name" value="Di-haem_cyt_TM"/>
</dbReference>
<dbReference type="PANTHER" id="PTHR19271">
    <property type="entry name" value="CYTOCHROME B"/>
    <property type="match status" value="1"/>
</dbReference>
<dbReference type="PANTHER" id="PTHR19271:SF16">
    <property type="entry name" value="CYTOCHROME B"/>
    <property type="match status" value="1"/>
</dbReference>
<dbReference type="Pfam" id="PF00032">
    <property type="entry name" value="Cytochrom_B_C"/>
    <property type="match status" value="1"/>
</dbReference>
<dbReference type="Pfam" id="PF00033">
    <property type="entry name" value="Cytochrome_B"/>
    <property type="match status" value="1"/>
</dbReference>
<dbReference type="PIRSF" id="PIRSF038885">
    <property type="entry name" value="COB"/>
    <property type="match status" value="1"/>
</dbReference>
<dbReference type="SUPFAM" id="SSF81648">
    <property type="entry name" value="a domain/subunit of cytochrome bc1 complex (Ubiquinol-cytochrome c reductase)"/>
    <property type="match status" value="1"/>
</dbReference>
<dbReference type="SUPFAM" id="SSF81342">
    <property type="entry name" value="Transmembrane di-heme cytochromes"/>
    <property type="match status" value="1"/>
</dbReference>
<dbReference type="PROSITE" id="PS51003">
    <property type="entry name" value="CYTB_CTER"/>
    <property type="match status" value="1"/>
</dbReference>
<dbReference type="PROSITE" id="PS51002">
    <property type="entry name" value="CYTB_NTER"/>
    <property type="match status" value="1"/>
</dbReference>
<gene>
    <name type="primary">MT-CYB</name>
    <name type="synonym">COB</name>
    <name type="synonym">CYTB</name>
    <name type="synonym">MTCYB</name>
</gene>
<keyword id="KW-0249">Electron transport</keyword>
<keyword id="KW-0349">Heme</keyword>
<keyword id="KW-0408">Iron</keyword>
<keyword id="KW-0472">Membrane</keyword>
<keyword id="KW-0479">Metal-binding</keyword>
<keyword id="KW-0496">Mitochondrion</keyword>
<keyword id="KW-0999">Mitochondrion inner membrane</keyword>
<keyword id="KW-0679">Respiratory chain</keyword>
<keyword id="KW-0812">Transmembrane</keyword>
<keyword id="KW-1133">Transmembrane helix</keyword>
<keyword id="KW-0813">Transport</keyword>
<keyword id="KW-0830">Ubiquinone</keyword>
<proteinExistence type="inferred from homology"/>
<comment type="function">
    <text evidence="2">Component of the ubiquinol-cytochrome c reductase complex (complex III or cytochrome b-c1 complex) that is part of the mitochondrial respiratory chain. The b-c1 complex mediates electron transfer from ubiquinol to cytochrome c. Contributes to the generation of a proton gradient across the mitochondrial membrane that is then used for ATP synthesis.</text>
</comment>
<comment type="cofactor">
    <cofactor evidence="2">
        <name>heme b</name>
        <dbReference type="ChEBI" id="CHEBI:60344"/>
    </cofactor>
    <text evidence="2">Binds 2 heme b groups non-covalently.</text>
</comment>
<comment type="subunit">
    <text evidence="2">The cytochrome bc1 complex contains 11 subunits: 3 respiratory subunits (MT-CYB, CYC1 and UQCRFS1), 2 core proteins (UQCRC1 and UQCRC2) and 6 low-molecular weight proteins (UQCRH/QCR6, UQCRB/QCR7, UQCRQ/QCR8, UQCR10/QCR9, UQCR11/QCR10 and a cleavage product of UQCRFS1). This cytochrome bc1 complex then forms a dimer.</text>
</comment>
<comment type="subcellular location">
    <subcellularLocation>
        <location evidence="2">Mitochondrion inner membrane</location>
        <topology evidence="2">Multi-pass membrane protein</topology>
    </subcellularLocation>
</comment>
<comment type="miscellaneous">
    <text evidence="1">Heme 1 (or BL or b562) is low-potential and absorbs at about 562 nm, and heme 2 (or BH or b566) is high-potential and absorbs at about 566 nm.</text>
</comment>
<comment type="similarity">
    <text evidence="3 4">Belongs to the cytochrome b family.</text>
</comment>
<comment type="caution">
    <text evidence="2">The full-length protein contains only eight transmembrane helices, not nine as predicted by bioinformatics tools.</text>
</comment>
<protein>
    <recommendedName>
        <fullName>Cytochrome b</fullName>
    </recommendedName>
    <alternativeName>
        <fullName>Complex III subunit 3</fullName>
    </alternativeName>
    <alternativeName>
        <fullName>Complex III subunit III</fullName>
    </alternativeName>
    <alternativeName>
        <fullName>Cytochrome b-c1 complex subunit 3</fullName>
    </alternativeName>
    <alternativeName>
        <fullName>Ubiquinol-cytochrome-c reductase complex cytochrome b subunit</fullName>
    </alternativeName>
</protein>
<evidence type="ECO:0000250" key="1"/>
<evidence type="ECO:0000250" key="2">
    <source>
        <dbReference type="UniProtKB" id="P00157"/>
    </source>
</evidence>
<evidence type="ECO:0000255" key="3">
    <source>
        <dbReference type="PROSITE-ProRule" id="PRU00967"/>
    </source>
</evidence>
<evidence type="ECO:0000255" key="4">
    <source>
        <dbReference type="PROSITE-ProRule" id="PRU00968"/>
    </source>
</evidence>